<protein>
    <recommendedName>
        <fullName>Translationally-controlled tumor protein homolog</fullName>
        <shortName>TCTP</shortName>
    </recommendedName>
</protein>
<evidence type="ECO:0000250" key="1"/>
<evidence type="ECO:0000255" key="2">
    <source>
        <dbReference type="PROSITE-ProRule" id="PRU01133"/>
    </source>
</evidence>
<accession>Q293Y0</accession>
<organism>
    <name type="scientific">Drosophila pseudoobscura pseudoobscura</name>
    <name type="common">Fruit fly</name>
    <dbReference type="NCBI Taxonomy" id="46245"/>
    <lineage>
        <taxon>Eukaryota</taxon>
        <taxon>Metazoa</taxon>
        <taxon>Ecdysozoa</taxon>
        <taxon>Arthropoda</taxon>
        <taxon>Hexapoda</taxon>
        <taxon>Insecta</taxon>
        <taxon>Pterygota</taxon>
        <taxon>Neoptera</taxon>
        <taxon>Endopterygota</taxon>
        <taxon>Diptera</taxon>
        <taxon>Brachycera</taxon>
        <taxon>Muscomorpha</taxon>
        <taxon>Ephydroidea</taxon>
        <taxon>Drosophilidae</taxon>
        <taxon>Drosophila</taxon>
        <taxon>Sophophora</taxon>
    </lineage>
</organism>
<feature type="chain" id="PRO_0000252308" description="Translationally-controlled tumor protein homolog">
    <location>
        <begin position="1"/>
        <end position="172"/>
    </location>
</feature>
<feature type="domain" description="TCTP" evidence="2">
    <location>
        <begin position="1"/>
        <end position="172"/>
    </location>
</feature>
<reference key="1">
    <citation type="journal article" date="2005" name="Genome Res.">
        <title>Comparative genome sequencing of Drosophila pseudoobscura: chromosomal, gene, and cis-element evolution.</title>
        <authorList>
            <person name="Richards S."/>
            <person name="Liu Y."/>
            <person name="Bettencourt B.R."/>
            <person name="Hradecky P."/>
            <person name="Letovsky S."/>
            <person name="Nielsen R."/>
            <person name="Thornton K."/>
            <person name="Hubisz M.J."/>
            <person name="Chen R."/>
            <person name="Meisel R.P."/>
            <person name="Couronne O."/>
            <person name="Hua S."/>
            <person name="Smith M.A."/>
            <person name="Zhang P."/>
            <person name="Liu J."/>
            <person name="Bussemaker H.J."/>
            <person name="van Batenburg M.F."/>
            <person name="Howells S.L."/>
            <person name="Scherer S.E."/>
            <person name="Sodergren E."/>
            <person name="Matthews B.B."/>
            <person name="Crosby M.A."/>
            <person name="Schroeder A.J."/>
            <person name="Ortiz-Barrientos D."/>
            <person name="Rives C.M."/>
            <person name="Metzker M.L."/>
            <person name="Muzny D.M."/>
            <person name="Scott G."/>
            <person name="Steffen D."/>
            <person name="Wheeler D.A."/>
            <person name="Worley K.C."/>
            <person name="Havlak P."/>
            <person name="Durbin K.J."/>
            <person name="Egan A."/>
            <person name="Gill R."/>
            <person name="Hume J."/>
            <person name="Morgan M.B."/>
            <person name="Miner G."/>
            <person name="Hamilton C."/>
            <person name="Huang Y."/>
            <person name="Waldron L."/>
            <person name="Verduzco D."/>
            <person name="Clerc-Blankenburg K.P."/>
            <person name="Dubchak I."/>
            <person name="Noor M.A.F."/>
            <person name="Anderson W."/>
            <person name="White K.P."/>
            <person name="Clark A.G."/>
            <person name="Schaeffer S.W."/>
            <person name="Gelbart W.M."/>
            <person name="Weinstock G.M."/>
            <person name="Gibbs R.A."/>
        </authorList>
    </citation>
    <scope>NUCLEOTIDE SEQUENCE [LARGE SCALE GENOMIC DNA]</scope>
    <source>
        <strain>MV2-25 / Tucson 14011-0121.94</strain>
    </source>
</reference>
<name>TCTP_DROPS</name>
<proteinExistence type="inferred from homology"/>
<dbReference type="EMBL" id="CM000070">
    <property type="protein sequence ID" value="EAL29084.1"/>
    <property type="molecule type" value="Genomic_DNA"/>
</dbReference>
<dbReference type="RefSeq" id="XP_001359932.1">
    <property type="nucleotide sequence ID" value="XM_001359895.4"/>
</dbReference>
<dbReference type="SMR" id="Q293Y0"/>
<dbReference type="FunCoup" id="Q293Y0">
    <property type="interactions" value="1515"/>
</dbReference>
<dbReference type="STRING" id="46245.Q293Y0"/>
<dbReference type="EnsemblMetazoa" id="FBtr0286426">
    <property type="protein sequence ID" value="FBpp0284864"/>
    <property type="gene ID" value="FBgn0078443"/>
</dbReference>
<dbReference type="GeneID" id="4803141"/>
<dbReference type="KEGG" id="dpo:4803141"/>
<dbReference type="CTD" id="41341"/>
<dbReference type="eggNOG" id="KOG1727">
    <property type="taxonomic scope" value="Eukaryota"/>
</dbReference>
<dbReference type="HOGENOM" id="CLU_095877_0_1_1"/>
<dbReference type="InParanoid" id="Q293Y0"/>
<dbReference type="OMA" id="CAMITEG"/>
<dbReference type="PhylomeDB" id="Q293Y0"/>
<dbReference type="ChiTaRS" id="Tctp">
    <property type="organism name" value="fly"/>
</dbReference>
<dbReference type="Proteomes" id="UP000001819">
    <property type="component" value="Chromosome 2"/>
</dbReference>
<dbReference type="Bgee" id="FBgn0078443">
    <property type="expression patterns" value="Expressed in female reproductive system and 2 other cell types or tissues"/>
</dbReference>
<dbReference type="GO" id="GO:0005737">
    <property type="term" value="C:cytoplasm"/>
    <property type="evidence" value="ECO:0000250"/>
    <property type="project" value="UniProtKB"/>
</dbReference>
<dbReference type="GO" id="GO:0005881">
    <property type="term" value="C:cytoplasmic microtubule"/>
    <property type="evidence" value="ECO:0000250"/>
    <property type="project" value="UniProtKB"/>
</dbReference>
<dbReference type="GO" id="GO:0005509">
    <property type="term" value="F:calcium ion binding"/>
    <property type="evidence" value="ECO:0000250"/>
    <property type="project" value="UniProtKB"/>
</dbReference>
<dbReference type="FunFam" id="2.170.150.10:FF:000002">
    <property type="entry name" value="Translationally-controlled tumor protein homolog"/>
    <property type="match status" value="1"/>
</dbReference>
<dbReference type="Gene3D" id="2.170.150.10">
    <property type="entry name" value="Metal Binding Protein, Guanine Nucleotide Exchange Factor, Chain A"/>
    <property type="match status" value="1"/>
</dbReference>
<dbReference type="InterPro" id="IPR011057">
    <property type="entry name" value="Mss4-like_sf"/>
</dbReference>
<dbReference type="InterPro" id="IPR011323">
    <property type="entry name" value="Mss4/transl-control_tumour"/>
</dbReference>
<dbReference type="InterPro" id="IPR034737">
    <property type="entry name" value="TCTP"/>
</dbReference>
<dbReference type="InterPro" id="IPR018103">
    <property type="entry name" value="Translation_control_tumour_CS"/>
</dbReference>
<dbReference type="InterPro" id="IPR018105">
    <property type="entry name" value="Translational_control_tumour_p"/>
</dbReference>
<dbReference type="PANTHER" id="PTHR11991">
    <property type="entry name" value="TRANSLATIONALLY CONTROLLED TUMOR PROTEIN-RELATED"/>
    <property type="match status" value="1"/>
</dbReference>
<dbReference type="PANTHER" id="PTHR11991:SF0">
    <property type="entry name" value="TRANSLATIONALLY-CONTROLLED TUMOR PROTEIN"/>
    <property type="match status" value="1"/>
</dbReference>
<dbReference type="Pfam" id="PF00838">
    <property type="entry name" value="TCTP"/>
    <property type="match status" value="1"/>
</dbReference>
<dbReference type="PRINTS" id="PR01653">
    <property type="entry name" value="TCTPROTEIN"/>
</dbReference>
<dbReference type="SUPFAM" id="SSF51316">
    <property type="entry name" value="Mss4-like"/>
    <property type="match status" value="1"/>
</dbReference>
<dbReference type="PROSITE" id="PS01002">
    <property type="entry name" value="TCTP_1"/>
    <property type="match status" value="1"/>
</dbReference>
<dbReference type="PROSITE" id="PS01003">
    <property type="entry name" value="TCTP_2"/>
    <property type="match status" value="1"/>
</dbReference>
<dbReference type="PROSITE" id="PS51797">
    <property type="entry name" value="TCTP_3"/>
    <property type="match status" value="1"/>
</dbReference>
<comment type="function">
    <text evidence="1">Involved in calcium binding and microtubule stabilization.</text>
</comment>
<comment type="subcellular location">
    <subcellularLocation>
        <location evidence="1">Cytoplasm</location>
    </subcellularLocation>
</comment>
<comment type="similarity">
    <text evidence="2">Belongs to the TCTP family.</text>
</comment>
<gene>
    <name type="primary">Tctp</name>
    <name type="ORF">GA18441</name>
</gene>
<sequence length="172" mass="19529">MKIFKDIITGDEMFADTYKIKLVDDVVYEVYGKLISREGSEIKLEGANASAEEADEGTDTNVESGVDVVLNHRLVECFAFGDKKSYTLYLKDYMKKVLAKLAEKSPDQVDVFKTNMNKAMKDILGRFKELQFFTGESMDCDGMVALVEYREIDGQSIPVLMFFKHGLEEEKC</sequence>
<keyword id="KW-0106">Calcium</keyword>
<keyword id="KW-0963">Cytoplasm</keyword>
<keyword id="KW-1185">Reference proteome</keyword>